<protein>
    <recommendedName>
        <fullName>Globin CTP-III</fullName>
    </recommendedName>
    <alternativeName>
        <fullName>Erythrocruorin III</fullName>
    </alternativeName>
</protein>
<proteinExistence type="evidence at protein level"/>
<keyword id="KW-0903">Direct protein sequencing</keyword>
<keyword id="KW-0349">Heme</keyword>
<keyword id="KW-0408">Iron</keyword>
<keyword id="KW-0479">Metal-binding</keyword>
<keyword id="KW-0561">Oxygen transport</keyword>
<keyword id="KW-0813">Transport</keyword>
<feature type="chain" id="PRO_0000052467" description="Globin CTP-III">
    <location>
        <begin position="1"/>
        <end position="136"/>
    </location>
</feature>
<feature type="domain" description="Globin" evidence="1">
    <location>
        <begin position="1"/>
        <end position="136"/>
    </location>
</feature>
<feature type="binding site" description="proximal binding residue" evidence="1">
    <location>
        <position position="87"/>
    </location>
    <ligand>
        <name>heme b</name>
        <dbReference type="ChEBI" id="CHEBI:60344"/>
    </ligand>
    <ligandPart>
        <name>Fe</name>
        <dbReference type="ChEBI" id="CHEBI:18248"/>
    </ligandPart>
</feature>
<feature type="sequence variant">
    <original>T</original>
    <variation>I</variation>
    <location>
        <position position="57"/>
    </location>
</feature>
<feature type="sequence variant">
    <original>V</original>
    <variation>I</variation>
    <location>
        <position position="105"/>
    </location>
</feature>
<feature type="sequence variant">
    <original>S</original>
    <variation>A</variation>
    <location>
        <position position="134"/>
    </location>
</feature>
<name>GLB3_CHITP</name>
<comment type="subunit">
    <text>Monomer.</text>
</comment>
<comment type="miscellaneous">
    <text>There are at least 12 different components in Midge globin.</text>
</comment>
<comment type="similarity">
    <text evidence="1">Belongs to the globin family.</text>
</comment>
<organism>
    <name type="scientific">Chironomus thummi piger</name>
    <name type="common">Midge</name>
    <name type="synonym">Chironomus piger</name>
    <dbReference type="NCBI Taxonomy" id="7156"/>
    <lineage>
        <taxon>Eukaryota</taxon>
        <taxon>Metazoa</taxon>
        <taxon>Ecdysozoa</taxon>
        <taxon>Arthropoda</taxon>
        <taxon>Hexapoda</taxon>
        <taxon>Insecta</taxon>
        <taxon>Pterygota</taxon>
        <taxon>Neoptera</taxon>
        <taxon>Endopterygota</taxon>
        <taxon>Diptera</taxon>
        <taxon>Nematocera</taxon>
        <taxon>Chironomoidea</taxon>
        <taxon>Chironomidae</taxon>
        <taxon>Chironominae</taxon>
        <taxon>Chironomus</taxon>
    </lineage>
</organism>
<dbReference type="PIR" id="A91687">
    <property type="entry name" value="GGICE3"/>
</dbReference>
<dbReference type="PIR" id="S05422">
    <property type="entry name" value="GGIC3"/>
</dbReference>
<dbReference type="SMR" id="P22431"/>
<dbReference type="GO" id="GO:0005576">
    <property type="term" value="C:extracellular region"/>
    <property type="evidence" value="ECO:0007669"/>
    <property type="project" value="InterPro"/>
</dbReference>
<dbReference type="GO" id="GO:0005833">
    <property type="term" value="C:hemoglobin complex"/>
    <property type="evidence" value="ECO:0007669"/>
    <property type="project" value="InterPro"/>
</dbReference>
<dbReference type="GO" id="GO:0020037">
    <property type="term" value="F:heme binding"/>
    <property type="evidence" value="ECO:0007669"/>
    <property type="project" value="InterPro"/>
</dbReference>
<dbReference type="GO" id="GO:0046872">
    <property type="term" value="F:metal ion binding"/>
    <property type="evidence" value="ECO:0007669"/>
    <property type="project" value="UniProtKB-KW"/>
</dbReference>
<dbReference type="GO" id="GO:0019825">
    <property type="term" value="F:oxygen binding"/>
    <property type="evidence" value="ECO:0007669"/>
    <property type="project" value="InterPro"/>
</dbReference>
<dbReference type="GO" id="GO:0005344">
    <property type="term" value="F:oxygen carrier activity"/>
    <property type="evidence" value="ECO:0007669"/>
    <property type="project" value="UniProtKB-KW"/>
</dbReference>
<dbReference type="CDD" id="cd01040">
    <property type="entry name" value="Mb-like"/>
    <property type="match status" value="1"/>
</dbReference>
<dbReference type="Gene3D" id="1.10.490.10">
    <property type="entry name" value="Globins"/>
    <property type="match status" value="1"/>
</dbReference>
<dbReference type="InterPro" id="IPR002336">
    <property type="entry name" value="Erythrocruorin"/>
</dbReference>
<dbReference type="InterPro" id="IPR000971">
    <property type="entry name" value="Globin"/>
</dbReference>
<dbReference type="InterPro" id="IPR009050">
    <property type="entry name" value="Globin-like_sf"/>
</dbReference>
<dbReference type="InterPro" id="IPR012292">
    <property type="entry name" value="Globin/Proto"/>
</dbReference>
<dbReference type="InterPro" id="IPR044399">
    <property type="entry name" value="Mb-like_M"/>
</dbReference>
<dbReference type="Pfam" id="PF00042">
    <property type="entry name" value="Globin"/>
    <property type="match status" value="1"/>
</dbReference>
<dbReference type="PRINTS" id="PR00611">
    <property type="entry name" value="ERYTHCRUORIN"/>
</dbReference>
<dbReference type="SUPFAM" id="SSF46458">
    <property type="entry name" value="Globin-like"/>
    <property type="match status" value="1"/>
</dbReference>
<dbReference type="PROSITE" id="PS01033">
    <property type="entry name" value="GLOBIN"/>
    <property type="match status" value="1"/>
</dbReference>
<sequence>LSADQISTVQASFDKVKGDPVGILYAVFKADPSIMAKFTQFAGKDLESIKGTAPFETHANRIVGFFSKIIGELPNIEADVNTFVASHKPRGVTHDQLNNFRAGFVSYMKAHTDFAGAEAAWGATLDTFFGMIFSKM</sequence>
<accession>P22431</accession>
<reference key="1">
    <citation type="journal article" date="1989" name="Biol. Chem. Hoppe-Seyler">
        <title>Comparison of insect hemoglobins (Erythrocruorins) from Chironomus thummi thummi and Chironomus thummi piger (Diptera). The primary structure of the monomeric hemoglobin CTP III.</title>
        <authorList>
            <person name="Kleinschmidt T."/>
            <person name="Keyl H.G."/>
            <person name="Braunitzer G."/>
        </authorList>
    </citation>
    <scope>PROTEIN SEQUENCE</scope>
</reference>
<evidence type="ECO:0000255" key="1">
    <source>
        <dbReference type="PROSITE-ProRule" id="PRU00238"/>
    </source>
</evidence>